<protein>
    <recommendedName>
        <fullName evidence="1">Small ribosomal subunit protein uS19</fullName>
    </recommendedName>
    <alternativeName>
        <fullName evidence="2">30S ribosomal protein S19</fullName>
    </alternativeName>
</protein>
<name>RS19_PSEF5</name>
<organism>
    <name type="scientific">Pseudomonas fluorescens (strain ATCC BAA-477 / NRRL B-23932 / Pf-5)</name>
    <dbReference type="NCBI Taxonomy" id="220664"/>
    <lineage>
        <taxon>Bacteria</taxon>
        <taxon>Pseudomonadati</taxon>
        <taxon>Pseudomonadota</taxon>
        <taxon>Gammaproteobacteria</taxon>
        <taxon>Pseudomonadales</taxon>
        <taxon>Pseudomonadaceae</taxon>
        <taxon>Pseudomonas</taxon>
    </lineage>
</organism>
<evidence type="ECO:0000255" key="1">
    <source>
        <dbReference type="HAMAP-Rule" id="MF_00531"/>
    </source>
</evidence>
<evidence type="ECO:0000305" key="2"/>
<reference key="1">
    <citation type="journal article" date="2005" name="Nat. Biotechnol.">
        <title>Complete genome sequence of the plant commensal Pseudomonas fluorescens Pf-5.</title>
        <authorList>
            <person name="Paulsen I.T."/>
            <person name="Press C.M."/>
            <person name="Ravel J."/>
            <person name="Kobayashi D.Y."/>
            <person name="Myers G.S.A."/>
            <person name="Mavrodi D.V."/>
            <person name="DeBoy R.T."/>
            <person name="Seshadri R."/>
            <person name="Ren Q."/>
            <person name="Madupu R."/>
            <person name="Dodson R.J."/>
            <person name="Durkin A.S."/>
            <person name="Brinkac L.M."/>
            <person name="Daugherty S.C."/>
            <person name="Sullivan S.A."/>
            <person name="Rosovitz M.J."/>
            <person name="Gwinn M.L."/>
            <person name="Zhou L."/>
            <person name="Schneider D.J."/>
            <person name="Cartinhour S.W."/>
            <person name="Nelson W.C."/>
            <person name="Weidman J."/>
            <person name="Watkins K."/>
            <person name="Tran K."/>
            <person name="Khouri H."/>
            <person name="Pierson E.A."/>
            <person name="Pierson L.S. III"/>
            <person name="Thomashow L.S."/>
            <person name="Loper J.E."/>
        </authorList>
    </citation>
    <scope>NUCLEOTIDE SEQUENCE [LARGE SCALE GENOMIC DNA]</scope>
    <source>
        <strain>ATCC BAA-477 / NRRL B-23932 / Pf-5</strain>
    </source>
</reference>
<gene>
    <name evidence="1" type="primary">rpsS</name>
    <name type="ordered locus">PFL_5578</name>
</gene>
<feature type="chain" id="PRO_0000265402" description="Small ribosomal subunit protein uS19">
    <location>
        <begin position="1"/>
        <end position="91"/>
    </location>
</feature>
<sequence length="91" mass="10334">MPRSLKKGPFIDLHLLKKIEVAAEKNDRKPVKTWSRRSMILPQMVGLTIAVHNGRQHVPVLVNEDMVGHKLGEFAGTRTYRGHVADKKAKR</sequence>
<accession>Q4K537</accession>
<dbReference type="EMBL" id="CP000076">
    <property type="protein sequence ID" value="AAY94783.1"/>
    <property type="molecule type" value="Genomic_DNA"/>
</dbReference>
<dbReference type="RefSeq" id="WP_002555486.1">
    <property type="nucleotide sequence ID" value="NC_004129.6"/>
</dbReference>
<dbReference type="SMR" id="Q4K537"/>
<dbReference type="STRING" id="220664.PFL_5578"/>
<dbReference type="GeneID" id="98285434"/>
<dbReference type="KEGG" id="pfl:PFL_5578"/>
<dbReference type="eggNOG" id="COG0185">
    <property type="taxonomic scope" value="Bacteria"/>
</dbReference>
<dbReference type="HOGENOM" id="CLU_144911_0_1_6"/>
<dbReference type="Proteomes" id="UP000008540">
    <property type="component" value="Chromosome"/>
</dbReference>
<dbReference type="GO" id="GO:0005737">
    <property type="term" value="C:cytoplasm"/>
    <property type="evidence" value="ECO:0007669"/>
    <property type="project" value="UniProtKB-ARBA"/>
</dbReference>
<dbReference type="GO" id="GO:0015935">
    <property type="term" value="C:small ribosomal subunit"/>
    <property type="evidence" value="ECO:0007669"/>
    <property type="project" value="InterPro"/>
</dbReference>
<dbReference type="GO" id="GO:0019843">
    <property type="term" value="F:rRNA binding"/>
    <property type="evidence" value="ECO:0007669"/>
    <property type="project" value="UniProtKB-UniRule"/>
</dbReference>
<dbReference type="GO" id="GO:0003735">
    <property type="term" value="F:structural constituent of ribosome"/>
    <property type="evidence" value="ECO:0007669"/>
    <property type="project" value="InterPro"/>
</dbReference>
<dbReference type="GO" id="GO:0000028">
    <property type="term" value="P:ribosomal small subunit assembly"/>
    <property type="evidence" value="ECO:0007669"/>
    <property type="project" value="TreeGrafter"/>
</dbReference>
<dbReference type="GO" id="GO:0006412">
    <property type="term" value="P:translation"/>
    <property type="evidence" value="ECO:0007669"/>
    <property type="project" value="UniProtKB-UniRule"/>
</dbReference>
<dbReference type="FunFam" id="3.30.860.10:FF:000001">
    <property type="entry name" value="30S ribosomal protein S19"/>
    <property type="match status" value="1"/>
</dbReference>
<dbReference type="Gene3D" id="3.30.860.10">
    <property type="entry name" value="30s Ribosomal Protein S19, Chain A"/>
    <property type="match status" value="1"/>
</dbReference>
<dbReference type="HAMAP" id="MF_00531">
    <property type="entry name" value="Ribosomal_uS19"/>
    <property type="match status" value="1"/>
</dbReference>
<dbReference type="InterPro" id="IPR002222">
    <property type="entry name" value="Ribosomal_uS19"/>
</dbReference>
<dbReference type="InterPro" id="IPR005732">
    <property type="entry name" value="Ribosomal_uS19_bac-type"/>
</dbReference>
<dbReference type="InterPro" id="IPR020934">
    <property type="entry name" value="Ribosomal_uS19_CS"/>
</dbReference>
<dbReference type="InterPro" id="IPR023575">
    <property type="entry name" value="Ribosomal_uS19_SF"/>
</dbReference>
<dbReference type="NCBIfam" id="TIGR01050">
    <property type="entry name" value="rpsS_bact"/>
    <property type="match status" value="1"/>
</dbReference>
<dbReference type="PANTHER" id="PTHR11880">
    <property type="entry name" value="RIBOSOMAL PROTEIN S19P FAMILY MEMBER"/>
    <property type="match status" value="1"/>
</dbReference>
<dbReference type="PANTHER" id="PTHR11880:SF8">
    <property type="entry name" value="SMALL RIBOSOMAL SUBUNIT PROTEIN US19M"/>
    <property type="match status" value="1"/>
</dbReference>
<dbReference type="Pfam" id="PF00203">
    <property type="entry name" value="Ribosomal_S19"/>
    <property type="match status" value="1"/>
</dbReference>
<dbReference type="PIRSF" id="PIRSF002144">
    <property type="entry name" value="Ribosomal_S19"/>
    <property type="match status" value="1"/>
</dbReference>
<dbReference type="PRINTS" id="PR00975">
    <property type="entry name" value="RIBOSOMALS19"/>
</dbReference>
<dbReference type="SUPFAM" id="SSF54570">
    <property type="entry name" value="Ribosomal protein S19"/>
    <property type="match status" value="1"/>
</dbReference>
<dbReference type="PROSITE" id="PS00323">
    <property type="entry name" value="RIBOSOMAL_S19"/>
    <property type="match status" value="1"/>
</dbReference>
<keyword id="KW-0687">Ribonucleoprotein</keyword>
<keyword id="KW-0689">Ribosomal protein</keyword>
<keyword id="KW-0694">RNA-binding</keyword>
<keyword id="KW-0699">rRNA-binding</keyword>
<comment type="function">
    <text evidence="1">Protein S19 forms a complex with S13 that binds strongly to the 16S ribosomal RNA.</text>
</comment>
<comment type="similarity">
    <text evidence="1">Belongs to the universal ribosomal protein uS19 family.</text>
</comment>
<proteinExistence type="inferred from homology"/>